<reference key="1">
    <citation type="journal article" date="2005" name="BMC Genomics">
        <title>Characterization of 954 bovine full-CDS cDNA sequences.</title>
        <authorList>
            <person name="Harhay G.P."/>
            <person name="Sonstegard T.S."/>
            <person name="Keele J.W."/>
            <person name="Heaton M.P."/>
            <person name="Clawson M.L."/>
            <person name="Snelling W.M."/>
            <person name="Wiedmann R.T."/>
            <person name="Van Tassell C.P."/>
            <person name="Smith T.P.L."/>
        </authorList>
    </citation>
    <scope>NUCLEOTIDE SEQUENCE [LARGE SCALE MRNA]</scope>
</reference>
<reference key="2">
    <citation type="submission" date="2007-07" db="EMBL/GenBank/DDBJ databases">
        <authorList>
            <consortium name="NIH - Mammalian Gene Collection (MGC) project"/>
        </authorList>
    </citation>
    <scope>NUCLEOTIDE SEQUENCE [LARGE SCALE MRNA]</scope>
    <source>
        <strain>Hereford</strain>
        <tissue>Basal ganglia</tissue>
    </source>
</reference>
<dbReference type="EMBL" id="BT021736">
    <property type="protein sequence ID" value="AAX46583.1"/>
    <property type="molecule type" value="mRNA"/>
</dbReference>
<dbReference type="EMBL" id="BC149078">
    <property type="protein sequence ID" value="AAI49079.1"/>
    <property type="molecule type" value="mRNA"/>
</dbReference>
<dbReference type="RefSeq" id="NP_001070440.1">
    <property type="nucleotide sequence ID" value="NM_001076972.1"/>
</dbReference>
<dbReference type="FunCoup" id="A6QNZ8">
    <property type="interactions" value="608"/>
</dbReference>
<dbReference type="STRING" id="9913.ENSBTAP00000016016"/>
<dbReference type="PaxDb" id="9913-ENSBTAP00000016016"/>
<dbReference type="Ensembl" id="ENSBTAT00000093076.1">
    <property type="protein sequence ID" value="ENSBTAP00000093328.1"/>
    <property type="gene ID" value="ENSBTAG00000012073.7"/>
</dbReference>
<dbReference type="GeneID" id="767861"/>
<dbReference type="KEGG" id="bta:767861"/>
<dbReference type="CTD" id="81552"/>
<dbReference type="VEuPathDB" id="HostDB:ENSBTAG00000012073"/>
<dbReference type="VGNC" id="VGNC:49588">
    <property type="gene designation" value="VOPP1"/>
</dbReference>
<dbReference type="eggNOG" id="ENOG502RYIF">
    <property type="taxonomic scope" value="Eukaryota"/>
</dbReference>
<dbReference type="GeneTree" id="ENSGT00390000015821"/>
<dbReference type="HOGENOM" id="CLU_1694909_0_0_1"/>
<dbReference type="InParanoid" id="A6QNZ8"/>
<dbReference type="OMA" id="FLECIEA"/>
<dbReference type="OrthoDB" id="6629737at2759"/>
<dbReference type="TreeFam" id="TF332098"/>
<dbReference type="Proteomes" id="UP000009136">
    <property type="component" value="Chromosome 22"/>
</dbReference>
<dbReference type="Bgee" id="ENSBTAG00000012073">
    <property type="expression patterns" value="Expressed in retina and 106 other cell types or tissues"/>
</dbReference>
<dbReference type="GO" id="GO:0030659">
    <property type="term" value="C:cytoplasmic vesicle membrane"/>
    <property type="evidence" value="ECO:0000250"/>
    <property type="project" value="UniProtKB"/>
</dbReference>
<dbReference type="GO" id="GO:0031902">
    <property type="term" value="C:late endosome membrane"/>
    <property type="evidence" value="ECO:0007669"/>
    <property type="project" value="UniProtKB-SubCell"/>
</dbReference>
<dbReference type="GO" id="GO:0005765">
    <property type="term" value="C:lysosomal membrane"/>
    <property type="evidence" value="ECO:0007669"/>
    <property type="project" value="UniProtKB-SubCell"/>
</dbReference>
<dbReference type="GO" id="GO:0031090">
    <property type="term" value="C:organelle membrane"/>
    <property type="evidence" value="ECO:0000250"/>
    <property type="project" value="UniProtKB"/>
</dbReference>
<dbReference type="InterPro" id="IPR026229">
    <property type="entry name" value="VOPP1"/>
</dbReference>
<dbReference type="PANTHER" id="PTHR14971">
    <property type="entry name" value="VESICULAR, OVEREXPRESSED IN CANCER, PROSURVIVAL PROTEIN 1"/>
    <property type="match status" value="1"/>
</dbReference>
<dbReference type="PANTHER" id="PTHR14971:SF2">
    <property type="entry name" value="VESICULAR, OVEREXPRESSED IN CANCER, PROSURVIVAL PROTEIN 1"/>
    <property type="match status" value="1"/>
</dbReference>
<dbReference type="PRINTS" id="PR02068">
    <property type="entry name" value="VOPPROTEIN1"/>
</dbReference>
<comment type="function">
    <text evidence="1">Increases the transcriptional activity of NFKB1 by facilitating its nuclear translocation, DNA-binding and associated apoptotic response, when overexpressed. May sequester WWOX in lysosomal vesicles and thereby regulate WWOX role as tumor suppressor.</text>
</comment>
<comment type="subunit">
    <text evidence="1">Interacts with WWOX (via WW domain).</text>
</comment>
<comment type="subcellular location">
    <subcellularLocation>
        <location evidence="1">Cytoplasmic vesicle membrane</location>
        <topology evidence="1">Single-pass type I membrane protein</topology>
    </subcellularLocation>
    <subcellularLocation>
        <location evidence="1">Late endosome membrane</location>
        <topology evidence="1">Single-pass membrane protein</topology>
    </subcellularLocation>
    <subcellularLocation>
        <location evidence="1">Lysosome membrane</location>
        <topology evidence="1">Single-pass membrane protein</topology>
    </subcellularLocation>
    <text evidence="1">When overexpressed, localizes in the nucleus and perinuclear regions.</text>
</comment>
<comment type="similarity">
    <text evidence="4">Belongs to the VOPP1/ECOP family.</text>
</comment>
<name>VOPP1_BOVIN</name>
<gene>
    <name type="primary">VOPP1</name>
    <name type="synonym">ECOP</name>
</gene>
<accession>A6QNZ8</accession>
<accession>Q58D61</accession>
<proteinExistence type="evidence at transcript level"/>
<sequence>MDSLAWRVAALLLGLLVECTEAKKHCWYFEGLYPTYYICRPYEDCCGSRCCVRALSIQRLWYFWFLLMMGVLFCCGAGFFIRRRMYPPPLIEEPAFNVSYTRQPQNPTPGAQPLGLPYYTDPGGSGMNPAGNPVAMAFQVQPNSSQGSTAYPPPPSYCNTPPPPYEQVVKTK</sequence>
<evidence type="ECO:0000250" key="1">
    <source>
        <dbReference type="UniProtKB" id="Q96AW1"/>
    </source>
</evidence>
<evidence type="ECO:0000255" key="2"/>
<evidence type="ECO:0000256" key="3">
    <source>
        <dbReference type="SAM" id="MobiDB-lite"/>
    </source>
</evidence>
<evidence type="ECO:0000305" key="4"/>
<protein>
    <recommendedName>
        <fullName evidence="4">WW domain binding protein VOPP1</fullName>
    </recommendedName>
    <alternativeName>
        <fullName>EGFR-coamplified and overexpressed protein</fullName>
        <shortName>ECop</shortName>
    </alternativeName>
    <alternativeName>
        <fullName>Vesicular, overexpressed in cancer, prosurvival protein 1</fullName>
    </alternativeName>
</protein>
<keyword id="KW-0968">Cytoplasmic vesicle</keyword>
<keyword id="KW-0967">Endosome</keyword>
<keyword id="KW-0458">Lysosome</keyword>
<keyword id="KW-0472">Membrane</keyword>
<keyword id="KW-1185">Reference proteome</keyword>
<keyword id="KW-0732">Signal</keyword>
<keyword id="KW-0804">Transcription</keyword>
<keyword id="KW-0805">Transcription regulation</keyword>
<keyword id="KW-0812">Transmembrane</keyword>
<keyword id="KW-1133">Transmembrane helix</keyword>
<organism>
    <name type="scientific">Bos taurus</name>
    <name type="common">Bovine</name>
    <dbReference type="NCBI Taxonomy" id="9913"/>
    <lineage>
        <taxon>Eukaryota</taxon>
        <taxon>Metazoa</taxon>
        <taxon>Chordata</taxon>
        <taxon>Craniata</taxon>
        <taxon>Vertebrata</taxon>
        <taxon>Euteleostomi</taxon>
        <taxon>Mammalia</taxon>
        <taxon>Eutheria</taxon>
        <taxon>Laurasiatheria</taxon>
        <taxon>Artiodactyla</taxon>
        <taxon>Ruminantia</taxon>
        <taxon>Pecora</taxon>
        <taxon>Bovidae</taxon>
        <taxon>Bovinae</taxon>
        <taxon>Bos</taxon>
    </lineage>
</organism>
<feature type="signal peptide" evidence="2">
    <location>
        <begin position="1"/>
        <end position="22"/>
    </location>
</feature>
<feature type="chain" id="PRO_0000325916" description="WW domain binding protein VOPP1">
    <location>
        <begin position="23"/>
        <end position="172"/>
    </location>
</feature>
<feature type="topological domain" description="Extracellular" evidence="2">
    <location>
        <begin position="23"/>
        <end position="60"/>
    </location>
</feature>
<feature type="transmembrane region" description="Helical" evidence="2">
    <location>
        <begin position="61"/>
        <end position="81"/>
    </location>
</feature>
<feature type="topological domain" description="Cytoplasmic" evidence="2">
    <location>
        <begin position="82"/>
        <end position="172"/>
    </location>
</feature>
<feature type="region of interest" description="Disordered" evidence="3">
    <location>
        <begin position="142"/>
        <end position="172"/>
    </location>
</feature>
<feature type="compositionally biased region" description="Pro residues" evidence="3">
    <location>
        <begin position="151"/>
        <end position="165"/>
    </location>
</feature>
<feature type="sequence conflict" description="In Ref. 1; AAX46583." evidence="4" ref="1">
    <original>A</original>
    <variation>G</variation>
    <location>
        <position position="150"/>
    </location>
</feature>